<protein>
    <recommendedName>
        <fullName evidence="1">Large ribosomal subunit protein bL9</fullName>
    </recommendedName>
    <alternativeName>
        <fullName evidence="2">50S ribosomal protein L9</fullName>
    </alternativeName>
</protein>
<sequence>MQVILLEKVVNLGNLGEVVKVKDGYARNFLIPQRKARRATAAAVAEFEVKRAELEKIAAEKLAASQAQGEKLTGQTVQITQKSGVDGRLFGSVTNSDIAEALTKQGFAVEKAQVRLPTGPLKVAGDHVVAVALHTDVVVDVTITVIGDHA</sequence>
<name>RL9_JANMA</name>
<keyword id="KW-0687">Ribonucleoprotein</keyword>
<keyword id="KW-0689">Ribosomal protein</keyword>
<keyword id="KW-0694">RNA-binding</keyword>
<keyword id="KW-0699">rRNA-binding</keyword>
<gene>
    <name evidence="1" type="primary">rplI</name>
    <name type="ordered locus">mma_1304</name>
</gene>
<evidence type="ECO:0000255" key="1">
    <source>
        <dbReference type="HAMAP-Rule" id="MF_00503"/>
    </source>
</evidence>
<evidence type="ECO:0000305" key="2"/>
<reference key="1">
    <citation type="journal article" date="2007" name="PLoS Genet.">
        <title>Genome analysis of Minibacterium massiliensis highlights the convergent evolution of water-living bacteria.</title>
        <authorList>
            <person name="Audic S."/>
            <person name="Robert C."/>
            <person name="Campagna B."/>
            <person name="Parinello H."/>
            <person name="Claverie J.-M."/>
            <person name="Raoult D."/>
            <person name="Drancourt M."/>
        </authorList>
    </citation>
    <scope>NUCLEOTIDE SEQUENCE [LARGE SCALE GENOMIC DNA]</scope>
    <source>
        <strain>Marseille</strain>
    </source>
</reference>
<dbReference type="EMBL" id="CP000269">
    <property type="protein sequence ID" value="ABR88551.1"/>
    <property type="molecule type" value="Genomic_DNA"/>
</dbReference>
<dbReference type="RefSeq" id="WP_012079161.1">
    <property type="nucleotide sequence ID" value="NC_009659.1"/>
</dbReference>
<dbReference type="SMR" id="A6SXJ7"/>
<dbReference type="STRING" id="375286.mma_1304"/>
<dbReference type="KEGG" id="mms:mma_1304"/>
<dbReference type="eggNOG" id="COG0359">
    <property type="taxonomic scope" value="Bacteria"/>
</dbReference>
<dbReference type="HOGENOM" id="CLU_078938_4_1_4"/>
<dbReference type="OrthoDB" id="9788336at2"/>
<dbReference type="Proteomes" id="UP000006388">
    <property type="component" value="Chromosome"/>
</dbReference>
<dbReference type="GO" id="GO:1990904">
    <property type="term" value="C:ribonucleoprotein complex"/>
    <property type="evidence" value="ECO:0007669"/>
    <property type="project" value="UniProtKB-KW"/>
</dbReference>
<dbReference type="GO" id="GO:0005840">
    <property type="term" value="C:ribosome"/>
    <property type="evidence" value="ECO:0007669"/>
    <property type="project" value="UniProtKB-KW"/>
</dbReference>
<dbReference type="GO" id="GO:0019843">
    <property type="term" value="F:rRNA binding"/>
    <property type="evidence" value="ECO:0007669"/>
    <property type="project" value="UniProtKB-UniRule"/>
</dbReference>
<dbReference type="GO" id="GO:0003735">
    <property type="term" value="F:structural constituent of ribosome"/>
    <property type="evidence" value="ECO:0007669"/>
    <property type="project" value="InterPro"/>
</dbReference>
<dbReference type="GO" id="GO:0006412">
    <property type="term" value="P:translation"/>
    <property type="evidence" value="ECO:0007669"/>
    <property type="project" value="UniProtKB-UniRule"/>
</dbReference>
<dbReference type="Gene3D" id="3.10.430.100">
    <property type="entry name" value="Ribosomal protein L9, C-terminal domain"/>
    <property type="match status" value="1"/>
</dbReference>
<dbReference type="Gene3D" id="3.40.5.10">
    <property type="entry name" value="Ribosomal protein L9, N-terminal domain"/>
    <property type="match status" value="1"/>
</dbReference>
<dbReference type="HAMAP" id="MF_00503">
    <property type="entry name" value="Ribosomal_bL9"/>
    <property type="match status" value="1"/>
</dbReference>
<dbReference type="InterPro" id="IPR000244">
    <property type="entry name" value="Ribosomal_bL9"/>
</dbReference>
<dbReference type="InterPro" id="IPR009027">
    <property type="entry name" value="Ribosomal_bL9/RNase_H1_N"/>
</dbReference>
<dbReference type="InterPro" id="IPR020594">
    <property type="entry name" value="Ribosomal_bL9_bac/chp"/>
</dbReference>
<dbReference type="InterPro" id="IPR020069">
    <property type="entry name" value="Ribosomal_bL9_C"/>
</dbReference>
<dbReference type="InterPro" id="IPR036791">
    <property type="entry name" value="Ribosomal_bL9_C_sf"/>
</dbReference>
<dbReference type="InterPro" id="IPR020070">
    <property type="entry name" value="Ribosomal_bL9_N"/>
</dbReference>
<dbReference type="InterPro" id="IPR036935">
    <property type="entry name" value="Ribosomal_bL9_N_sf"/>
</dbReference>
<dbReference type="NCBIfam" id="TIGR00158">
    <property type="entry name" value="L9"/>
    <property type="match status" value="1"/>
</dbReference>
<dbReference type="PANTHER" id="PTHR21368">
    <property type="entry name" value="50S RIBOSOMAL PROTEIN L9"/>
    <property type="match status" value="1"/>
</dbReference>
<dbReference type="Pfam" id="PF03948">
    <property type="entry name" value="Ribosomal_L9_C"/>
    <property type="match status" value="1"/>
</dbReference>
<dbReference type="Pfam" id="PF01281">
    <property type="entry name" value="Ribosomal_L9_N"/>
    <property type="match status" value="1"/>
</dbReference>
<dbReference type="SUPFAM" id="SSF55658">
    <property type="entry name" value="L9 N-domain-like"/>
    <property type="match status" value="1"/>
</dbReference>
<dbReference type="SUPFAM" id="SSF55653">
    <property type="entry name" value="Ribosomal protein L9 C-domain"/>
    <property type="match status" value="1"/>
</dbReference>
<dbReference type="PROSITE" id="PS00651">
    <property type="entry name" value="RIBOSOMAL_L9"/>
    <property type="match status" value="1"/>
</dbReference>
<comment type="function">
    <text evidence="1">Binds to the 23S rRNA.</text>
</comment>
<comment type="similarity">
    <text evidence="1">Belongs to the bacterial ribosomal protein bL9 family.</text>
</comment>
<accession>A6SXJ7</accession>
<feature type="chain" id="PRO_1000014793" description="Large ribosomal subunit protein bL9">
    <location>
        <begin position="1"/>
        <end position="150"/>
    </location>
</feature>
<proteinExistence type="inferred from homology"/>
<organism>
    <name type="scientific">Janthinobacterium sp. (strain Marseille)</name>
    <name type="common">Minibacterium massiliensis</name>
    <dbReference type="NCBI Taxonomy" id="375286"/>
    <lineage>
        <taxon>Bacteria</taxon>
        <taxon>Pseudomonadati</taxon>
        <taxon>Pseudomonadota</taxon>
        <taxon>Betaproteobacteria</taxon>
        <taxon>Burkholderiales</taxon>
        <taxon>Oxalobacteraceae</taxon>
        <taxon>Janthinobacterium</taxon>
    </lineage>
</organism>